<dbReference type="EC" id="3.1.26.3" evidence="1"/>
<dbReference type="EMBL" id="CP000094">
    <property type="protein sequence ID" value="ABA72737.1"/>
    <property type="molecule type" value="Genomic_DNA"/>
</dbReference>
<dbReference type="RefSeq" id="WP_011332589.1">
    <property type="nucleotide sequence ID" value="NC_007492.2"/>
</dbReference>
<dbReference type="SMR" id="Q3KHL9"/>
<dbReference type="KEGG" id="pfo:Pfl01_0994"/>
<dbReference type="eggNOG" id="COG0571">
    <property type="taxonomic scope" value="Bacteria"/>
</dbReference>
<dbReference type="HOGENOM" id="CLU_000907_1_1_6"/>
<dbReference type="Proteomes" id="UP000002704">
    <property type="component" value="Chromosome"/>
</dbReference>
<dbReference type="GO" id="GO:0005737">
    <property type="term" value="C:cytoplasm"/>
    <property type="evidence" value="ECO:0007669"/>
    <property type="project" value="UniProtKB-SubCell"/>
</dbReference>
<dbReference type="GO" id="GO:0003725">
    <property type="term" value="F:double-stranded RNA binding"/>
    <property type="evidence" value="ECO:0007669"/>
    <property type="project" value="TreeGrafter"/>
</dbReference>
<dbReference type="GO" id="GO:0046872">
    <property type="term" value="F:metal ion binding"/>
    <property type="evidence" value="ECO:0007669"/>
    <property type="project" value="UniProtKB-KW"/>
</dbReference>
<dbReference type="GO" id="GO:0004525">
    <property type="term" value="F:ribonuclease III activity"/>
    <property type="evidence" value="ECO:0007669"/>
    <property type="project" value="UniProtKB-UniRule"/>
</dbReference>
<dbReference type="GO" id="GO:0019843">
    <property type="term" value="F:rRNA binding"/>
    <property type="evidence" value="ECO:0007669"/>
    <property type="project" value="UniProtKB-KW"/>
</dbReference>
<dbReference type="GO" id="GO:0006397">
    <property type="term" value="P:mRNA processing"/>
    <property type="evidence" value="ECO:0007669"/>
    <property type="project" value="UniProtKB-UniRule"/>
</dbReference>
<dbReference type="GO" id="GO:0010468">
    <property type="term" value="P:regulation of gene expression"/>
    <property type="evidence" value="ECO:0007669"/>
    <property type="project" value="TreeGrafter"/>
</dbReference>
<dbReference type="GO" id="GO:0006364">
    <property type="term" value="P:rRNA processing"/>
    <property type="evidence" value="ECO:0007669"/>
    <property type="project" value="UniProtKB-UniRule"/>
</dbReference>
<dbReference type="GO" id="GO:0008033">
    <property type="term" value="P:tRNA processing"/>
    <property type="evidence" value="ECO:0007669"/>
    <property type="project" value="UniProtKB-KW"/>
</dbReference>
<dbReference type="CDD" id="cd10845">
    <property type="entry name" value="DSRM_RNAse_III_family"/>
    <property type="match status" value="1"/>
</dbReference>
<dbReference type="CDD" id="cd00593">
    <property type="entry name" value="RIBOc"/>
    <property type="match status" value="1"/>
</dbReference>
<dbReference type="FunFam" id="1.10.1520.10:FF:000001">
    <property type="entry name" value="Ribonuclease 3"/>
    <property type="match status" value="1"/>
</dbReference>
<dbReference type="FunFam" id="3.30.160.20:FF:000003">
    <property type="entry name" value="Ribonuclease 3"/>
    <property type="match status" value="1"/>
</dbReference>
<dbReference type="Gene3D" id="3.30.160.20">
    <property type="match status" value="1"/>
</dbReference>
<dbReference type="Gene3D" id="1.10.1520.10">
    <property type="entry name" value="Ribonuclease III domain"/>
    <property type="match status" value="1"/>
</dbReference>
<dbReference type="HAMAP" id="MF_00104">
    <property type="entry name" value="RNase_III"/>
    <property type="match status" value="1"/>
</dbReference>
<dbReference type="InterPro" id="IPR014720">
    <property type="entry name" value="dsRBD_dom"/>
</dbReference>
<dbReference type="InterPro" id="IPR011907">
    <property type="entry name" value="RNase_III"/>
</dbReference>
<dbReference type="InterPro" id="IPR000999">
    <property type="entry name" value="RNase_III_dom"/>
</dbReference>
<dbReference type="InterPro" id="IPR036389">
    <property type="entry name" value="RNase_III_sf"/>
</dbReference>
<dbReference type="NCBIfam" id="TIGR02191">
    <property type="entry name" value="RNaseIII"/>
    <property type="match status" value="1"/>
</dbReference>
<dbReference type="PANTHER" id="PTHR11207:SF0">
    <property type="entry name" value="RIBONUCLEASE 3"/>
    <property type="match status" value="1"/>
</dbReference>
<dbReference type="PANTHER" id="PTHR11207">
    <property type="entry name" value="RIBONUCLEASE III"/>
    <property type="match status" value="1"/>
</dbReference>
<dbReference type="Pfam" id="PF00035">
    <property type="entry name" value="dsrm"/>
    <property type="match status" value="1"/>
</dbReference>
<dbReference type="Pfam" id="PF14622">
    <property type="entry name" value="Ribonucleas_3_3"/>
    <property type="match status" value="1"/>
</dbReference>
<dbReference type="SMART" id="SM00358">
    <property type="entry name" value="DSRM"/>
    <property type="match status" value="1"/>
</dbReference>
<dbReference type="SMART" id="SM00535">
    <property type="entry name" value="RIBOc"/>
    <property type="match status" value="1"/>
</dbReference>
<dbReference type="SUPFAM" id="SSF54768">
    <property type="entry name" value="dsRNA-binding domain-like"/>
    <property type="match status" value="1"/>
</dbReference>
<dbReference type="SUPFAM" id="SSF69065">
    <property type="entry name" value="RNase III domain-like"/>
    <property type="match status" value="1"/>
</dbReference>
<dbReference type="PROSITE" id="PS50137">
    <property type="entry name" value="DS_RBD"/>
    <property type="match status" value="1"/>
</dbReference>
<dbReference type="PROSITE" id="PS00517">
    <property type="entry name" value="RNASE_3_1"/>
    <property type="match status" value="1"/>
</dbReference>
<dbReference type="PROSITE" id="PS50142">
    <property type="entry name" value="RNASE_3_2"/>
    <property type="match status" value="1"/>
</dbReference>
<reference key="1">
    <citation type="journal article" date="2009" name="Genome Biol.">
        <title>Genomic and genetic analyses of diversity and plant interactions of Pseudomonas fluorescens.</title>
        <authorList>
            <person name="Silby M.W."/>
            <person name="Cerdeno-Tarraga A.M."/>
            <person name="Vernikos G.S."/>
            <person name="Giddens S.R."/>
            <person name="Jackson R.W."/>
            <person name="Preston G.M."/>
            <person name="Zhang X.-X."/>
            <person name="Moon C.D."/>
            <person name="Gehrig S.M."/>
            <person name="Godfrey S.A.C."/>
            <person name="Knight C.G."/>
            <person name="Malone J.G."/>
            <person name="Robinson Z."/>
            <person name="Spiers A.J."/>
            <person name="Harris S."/>
            <person name="Challis G.L."/>
            <person name="Yaxley A.M."/>
            <person name="Harris D."/>
            <person name="Seeger K."/>
            <person name="Murphy L."/>
            <person name="Rutter S."/>
            <person name="Squares R."/>
            <person name="Quail M.A."/>
            <person name="Saunders E."/>
            <person name="Mavromatis K."/>
            <person name="Brettin T.S."/>
            <person name="Bentley S.D."/>
            <person name="Hothersall J."/>
            <person name="Stephens E."/>
            <person name="Thomas C.M."/>
            <person name="Parkhill J."/>
            <person name="Levy S.B."/>
            <person name="Rainey P.B."/>
            <person name="Thomson N.R."/>
        </authorList>
    </citation>
    <scope>NUCLEOTIDE SEQUENCE [LARGE SCALE GENOMIC DNA]</scope>
    <source>
        <strain>Pf0-1</strain>
    </source>
</reference>
<comment type="function">
    <text evidence="1">Digests double-stranded RNA. Involved in the processing of primary rRNA transcript to yield the immediate precursors to the large and small rRNAs (23S and 16S). Processes some mRNAs, and tRNAs when they are encoded in the rRNA operon. Processes pre-crRNA and tracrRNA of type II CRISPR loci if present in the organism.</text>
</comment>
<comment type="catalytic activity">
    <reaction evidence="1">
        <text>Endonucleolytic cleavage to 5'-phosphomonoester.</text>
        <dbReference type="EC" id="3.1.26.3"/>
    </reaction>
</comment>
<comment type="cofactor">
    <cofactor evidence="1">
        <name>Mg(2+)</name>
        <dbReference type="ChEBI" id="CHEBI:18420"/>
    </cofactor>
</comment>
<comment type="subunit">
    <text evidence="1">Homodimer.</text>
</comment>
<comment type="subcellular location">
    <subcellularLocation>
        <location evidence="1">Cytoplasm</location>
    </subcellularLocation>
</comment>
<comment type="similarity">
    <text evidence="1">Belongs to the ribonuclease III family.</text>
</comment>
<proteinExistence type="inferred from homology"/>
<evidence type="ECO:0000255" key="1">
    <source>
        <dbReference type="HAMAP-Rule" id="MF_00104"/>
    </source>
</evidence>
<name>RNC_PSEPF</name>
<protein>
    <recommendedName>
        <fullName evidence="1">Ribonuclease 3</fullName>
        <ecNumber evidence="1">3.1.26.3</ecNumber>
    </recommendedName>
    <alternativeName>
        <fullName evidence="1">Ribonuclease III</fullName>
        <shortName evidence="1">RNase III</shortName>
    </alternativeName>
</protein>
<organism>
    <name type="scientific">Pseudomonas fluorescens (strain Pf0-1)</name>
    <dbReference type="NCBI Taxonomy" id="205922"/>
    <lineage>
        <taxon>Bacteria</taxon>
        <taxon>Pseudomonadati</taxon>
        <taxon>Pseudomonadota</taxon>
        <taxon>Gammaproteobacteria</taxon>
        <taxon>Pseudomonadales</taxon>
        <taxon>Pseudomonadaceae</taxon>
        <taxon>Pseudomonas</taxon>
    </lineage>
</organism>
<gene>
    <name evidence="1" type="primary">rnc</name>
    <name type="ordered locus">Pfl01_0994</name>
</gene>
<accession>Q3KHL9</accession>
<keyword id="KW-0963">Cytoplasm</keyword>
<keyword id="KW-0255">Endonuclease</keyword>
<keyword id="KW-0378">Hydrolase</keyword>
<keyword id="KW-0460">Magnesium</keyword>
<keyword id="KW-0479">Metal-binding</keyword>
<keyword id="KW-0507">mRNA processing</keyword>
<keyword id="KW-0540">Nuclease</keyword>
<keyword id="KW-0694">RNA-binding</keyword>
<keyword id="KW-0698">rRNA processing</keyword>
<keyword id="KW-0699">rRNA-binding</keyword>
<keyword id="KW-0819">tRNA processing</keyword>
<feature type="chain" id="PRO_0000228567" description="Ribonuclease 3">
    <location>
        <begin position="1"/>
        <end position="229"/>
    </location>
</feature>
<feature type="domain" description="RNase III" evidence="1">
    <location>
        <begin position="5"/>
        <end position="127"/>
    </location>
</feature>
<feature type="domain" description="DRBM" evidence="1">
    <location>
        <begin position="154"/>
        <end position="224"/>
    </location>
</feature>
<feature type="active site" evidence="1">
    <location>
        <position position="44"/>
    </location>
</feature>
<feature type="active site" evidence="1">
    <location>
        <position position="116"/>
    </location>
</feature>
<feature type="binding site" evidence="1">
    <location>
        <position position="40"/>
    </location>
    <ligand>
        <name>Mg(2+)</name>
        <dbReference type="ChEBI" id="CHEBI:18420"/>
    </ligand>
</feature>
<feature type="binding site" evidence="1">
    <location>
        <position position="113"/>
    </location>
    <ligand>
        <name>Mg(2+)</name>
        <dbReference type="ChEBI" id="CHEBI:18420"/>
    </ligand>
</feature>
<feature type="binding site" evidence="1">
    <location>
        <position position="116"/>
    </location>
    <ligand>
        <name>Mg(2+)</name>
        <dbReference type="ChEBI" id="CHEBI:18420"/>
    </ligand>
</feature>
<sequence>MSVSLSRLERQLGYTFKDQELMVLALTHRSFAGRNNERLEFLGDAILNFVAGEALFDRFPLAREGQLSRLRARLVKGETLAVLARGFDLGDYLRLGSGELKSGGFRRESILADALEALIGAIYLDAGMEVARERVLAWLAGEFEGLTLVDTNKDPKTRLQEFLQSRGCELPRYEVVDIQGEPHCRTFFVECEVVLLNEKSRGQGVSRRIAEQVAAAAALIALGVENGND</sequence>